<dbReference type="EC" id="1.5.1.3"/>
<dbReference type="EMBL" id="Z50141">
    <property type="protein sequence ID" value="CAA90486.1"/>
    <property type="molecule type" value="Genomic_DNA"/>
</dbReference>
<dbReference type="SMR" id="Q54277"/>
<dbReference type="STRING" id="1283.ShL2_01296"/>
<dbReference type="KEGG" id="ag:CAA90486"/>
<dbReference type="UniPathway" id="UPA00077">
    <property type="reaction ID" value="UER00158"/>
</dbReference>
<dbReference type="GO" id="GO:0005829">
    <property type="term" value="C:cytosol"/>
    <property type="evidence" value="ECO:0007669"/>
    <property type="project" value="TreeGrafter"/>
</dbReference>
<dbReference type="GO" id="GO:0004146">
    <property type="term" value="F:dihydrofolate reductase activity"/>
    <property type="evidence" value="ECO:0007669"/>
    <property type="project" value="UniProtKB-EC"/>
</dbReference>
<dbReference type="GO" id="GO:0050661">
    <property type="term" value="F:NADP binding"/>
    <property type="evidence" value="ECO:0007669"/>
    <property type="project" value="InterPro"/>
</dbReference>
<dbReference type="GO" id="GO:0046452">
    <property type="term" value="P:dihydrofolate metabolic process"/>
    <property type="evidence" value="ECO:0007669"/>
    <property type="project" value="TreeGrafter"/>
</dbReference>
<dbReference type="GO" id="GO:0046655">
    <property type="term" value="P:folic acid metabolic process"/>
    <property type="evidence" value="ECO:0007669"/>
    <property type="project" value="TreeGrafter"/>
</dbReference>
<dbReference type="GO" id="GO:0006730">
    <property type="term" value="P:one-carbon metabolic process"/>
    <property type="evidence" value="ECO:0007669"/>
    <property type="project" value="UniProtKB-KW"/>
</dbReference>
<dbReference type="GO" id="GO:0046677">
    <property type="term" value="P:response to antibiotic"/>
    <property type="evidence" value="ECO:0007669"/>
    <property type="project" value="UniProtKB-KW"/>
</dbReference>
<dbReference type="GO" id="GO:0031427">
    <property type="term" value="P:response to methotrexate"/>
    <property type="evidence" value="ECO:0007669"/>
    <property type="project" value="UniProtKB-KW"/>
</dbReference>
<dbReference type="GO" id="GO:0046654">
    <property type="term" value="P:tetrahydrofolate biosynthetic process"/>
    <property type="evidence" value="ECO:0007669"/>
    <property type="project" value="UniProtKB-UniPathway"/>
</dbReference>
<dbReference type="CDD" id="cd00209">
    <property type="entry name" value="DHFR"/>
    <property type="match status" value="1"/>
</dbReference>
<dbReference type="FunFam" id="3.40.430.10:FF:000001">
    <property type="entry name" value="Dihydrofolate reductase"/>
    <property type="match status" value="1"/>
</dbReference>
<dbReference type="Gene3D" id="3.40.430.10">
    <property type="entry name" value="Dihydrofolate Reductase, subunit A"/>
    <property type="match status" value="1"/>
</dbReference>
<dbReference type="InterPro" id="IPR012259">
    <property type="entry name" value="DHFR"/>
</dbReference>
<dbReference type="InterPro" id="IPR024072">
    <property type="entry name" value="DHFR-like_dom_sf"/>
</dbReference>
<dbReference type="InterPro" id="IPR017925">
    <property type="entry name" value="DHFR_CS"/>
</dbReference>
<dbReference type="InterPro" id="IPR001796">
    <property type="entry name" value="DHFR_dom"/>
</dbReference>
<dbReference type="NCBIfam" id="NF000159">
    <property type="entry name" value="trim_DfrD"/>
    <property type="match status" value="1"/>
</dbReference>
<dbReference type="NCBIfam" id="NF000332">
    <property type="entry name" value="trim_DfrDGK"/>
    <property type="match status" value="1"/>
</dbReference>
<dbReference type="PANTHER" id="PTHR48069">
    <property type="entry name" value="DIHYDROFOLATE REDUCTASE"/>
    <property type="match status" value="1"/>
</dbReference>
<dbReference type="PANTHER" id="PTHR48069:SF3">
    <property type="entry name" value="DIHYDROFOLATE REDUCTASE"/>
    <property type="match status" value="1"/>
</dbReference>
<dbReference type="Pfam" id="PF00186">
    <property type="entry name" value="DHFR_1"/>
    <property type="match status" value="1"/>
</dbReference>
<dbReference type="PIRSF" id="PIRSF000194">
    <property type="entry name" value="DHFR"/>
    <property type="match status" value="1"/>
</dbReference>
<dbReference type="PRINTS" id="PR00070">
    <property type="entry name" value="DHFR"/>
</dbReference>
<dbReference type="SUPFAM" id="SSF53597">
    <property type="entry name" value="Dihydrofolate reductase-like"/>
    <property type="match status" value="1"/>
</dbReference>
<dbReference type="PROSITE" id="PS00075">
    <property type="entry name" value="DHFR_1"/>
    <property type="match status" value="1"/>
</dbReference>
<dbReference type="PROSITE" id="PS51330">
    <property type="entry name" value="DHFR_2"/>
    <property type="match status" value="1"/>
</dbReference>
<accession>Q54277</accession>
<gene>
    <name type="primary">dfrD</name>
</gene>
<name>DYR_STAHA</name>
<evidence type="ECO:0000250" key="1"/>
<evidence type="ECO:0000255" key="2">
    <source>
        <dbReference type="PROSITE-ProRule" id="PRU00660"/>
    </source>
</evidence>
<evidence type="ECO:0000269" key="3">
    <source>
    </source>
</evidence>
<evidence type="ECO:0000305" key="4"/>
<reference key="1">
    <citation type="journal article" date="1995" name="Antimicrob. Agents Chemother.">
        <title>Cloning and characterization of a novel, plasmid-encoded trimethoprim-resistant dihydrofolate reductase from Staphylococcus haemolyticus MUR313.</title>
        <authorList>
            <person name="Dale G.E."/>
            <person name="Langen H."/>
            <person name="Page M.G."/>
            <person name="Then R.L."/>
            <person name="Stueber D."/>
        </authorList>
    </citation>
    <scope>NUCLEOTIDE SEQUENCE [GENOMIC DNA]</scope>
    <scope>MASS SPECTROMETRY</scope>
    <source>
        <strain>MUR313</strain>
    </source>
</reference>
<feature type="chain" id="PRO_0000186416" description="Dihydrofolate reductase">
    <location>
        <begin position="1"/>
        <end position="166"/>
    </location>
</feature>
<feature type="domain" description="DHFR" evidence="2">
    <location>
        <begin position="6"/>
        <end position="164"/>
    </location>
</feature>
<feature type="binding site" evidence="1">
    <location>
        <begin position="10"/>
        <end position="12"/>
    </location>
    <ligand>
        <name>substrate</name>
    </ligand>
</feature>
<feature type="binding site" evidence="1">
    <location>
        <begin position="11"/>
        <end position="12"/>
    </location>
    <ligand>
        <name>NADP(+)</name>
        <dbReference type="ChEBI" id="CHEBI:58349"/>
    </ligand>
</feature>
<feature type="binding site" evidence="1">
    <location>
        <begin position="19"/>
        <end position="24"/>
    </location>
    <ligand>
        <name>NADP(+)</name>
        <dbReference type="ChEBI" id="CHEBI:58349"/>
    </ligand>
</feature>
<feature type="binding site" evidence="1">
    <location>
        <position position="32"/>
    </location>
    <ligand>
        <name>substrate</name>
    </ligand>
</feature>
<feature type="binding site" evidence="1">
    <location>
        <begin position="48"/>
        <end position="51"/>
    </location>
    <ligand>
        <name>NADP(+)</name>
        <dbReference type="ChEBI" id="CHEBI:58349"/>
    </ligand>
</feature>
<feature type="binding site" evidence="1">
    <location>
        <position position="62"/>
    </location>
    <ligand>
        <name>substrate</name>
    </ligand>
</feature>
<feature type="binding site" evidence="1">
    <location>
        <begin position="67"/>
        <end position="70"/>
    </location>
    <ligand>
        <name>NADP(+)</name>
        <dbReference type="ChEBI" id="CHEBI:58349"/>
    </ligand>
</feature>
<feature type="binding site" evidence="1">
    <location>
        <begin position="100"/>
        <end position="105"/>
    </location>
    <ligand>
        <name>NADP(+)</name>
        <dbReference type="ChEBI" id="CHEBI:58349"/>
    </ligand>
</feature>
<feature type="binding site" evidence="1">
    <location>
        <position position="119"/>
    </location>
    <ligand>
        <name>substrate</name>
    </ligand>
</feature>
<organism>
    <name type="scientific">Staphylococcus haemolyticus</name>
    <dbReference type="NCBI Taxonomy" id="1283"/>
    <lineage>
        <taxon>Bacteria</taxon>
        <taxon>Bacillati</taxon>
        <taxon>Bacillota</taxon>
        <taxon>Bacilli</taxon>
        <taxon>Bacillales</taxon>
        <taxon>Staphylococcaceae</taxon>
        <taxon>Staphylococcus</taxon>
    </lineage>
</organism>
<comment type="function">
    <text evidence="1">Key enzyme in folate metabolism. Catalyzes an essential reaction for de novo glycine and purine synthesis, and for DNA precursor synthesis (By similarity).</text>
</comment>
<comment type="catalytic activity">
    <reaction evidence="2">
        <text>(6S)-5,6,7,8-tetrahydrofolate + NADP(+) = 7,8-dihydrofolate + NADPH + H(+)</text>
        <dbReference type="Rhea" id="RHEA:15009"/>
        <dbReference type="ChEBI" id="CHEBI:15378"/>
        <dbReference type="ChEBI" id="CHEBI:57451"/>
        <dbReference type="ChEBI" id="CHEBI:57453"/>
        <dbReference type="ChEBI" id="CHEBI:57783"/>
        <dbReference type="ChEBI" id="CHEBI:58349"/>
        <dbReference type="EC" id="1.5.1.3"/>
    </reaction>
</comment>
<comment type="pathway">
    <text>Cofactor biosynthesis; tetrahydrofolate biosynthesis; 5,6,7,8-tetrahydrofolate from 7,8-dihydrofolate: step 1/1.</text>
</comment>
<comment type="mass spectrometry" mass="19821.2" error="2.0" method="Electrospray" evidence="3"/>
<comment type="miscellaneous">
    <text>Confers trimethoprim resistance.</text>
</comment>
<comment type="similarity">
    <text evidence="4">Belongs to the dihydrofolate reductase family.</text>
</comment>
<geneLocation type="plasmid">
    <name>pABU17</name>
</geneLocation>
<proteinExistence type="evidence at protein level"/>
<sequence length="166" mass="19825">MWSFLKISLIVAMDKKRVIGKDNDIPWRISSDWEYVKNTTKGHAIILGRKNLQSIGRALPDRRNIILTRDKNFNFKDCEIAHSIEAAFKLCENEEEVFIFGGEQIYVMFLPYVEKMYVTKIHHEFEGDTFFPVVNFDDWKEVSVEKGIKDEKNPYDYYFHIYERIR</sequence>
<keyword id="KW-0046">Antibiotic resistance</keyword>
<keyword id="KW-0487">Methotrexate resistance</keyword>
<keyword id="KW-0521">NADP</keyword>
<keyword id="KW-0554">One-carbon metabolism</keyword>
<keyword id="KW-0560">Oxidoreductase</keyword>
<keyword id="KW-0614">Plasmid</keyword>
<keyword id="KW-0817">Trimethoprim resistance</keyword>
<protein>
    <recommendedName>
        <fullName>Dihydrofolate reductase</fullName>
        <ecNumber>1.5.1.3</ecNumber>
    </recommendedName>
</protein>